<comment type="function">
    <text evidence="1">Binds together with bS18 to 16S ribosomal RNA.</text>
</comment>
<comment type="similarity">
    <text evidence="1">Belongs to the bacterial ribosomal protein bS6 family.</text>
</comment>
<evidence type="ECO:0000255" key="1">
    <source>
        <dbReference type="HAMAP-Rule" id="MF_00360"/>
    </source>
</evidence>
<evidence type="ECO:0000305" key="2"/>
<accession>Q8A5S5</accession>
<reference key="1">
    <citation type="journal article" date="2003" name="Science">
        <title>A genomic view of the human-Bacteroides thetaiotaomicron symbiosis.</title>
        <authorList>
            <person name="Xu J."/>
            <person name="Bjursell M.K."/>
            <person name="Himrod J."/>
            <person name="Deng S."/>
            <person name="Carmichael L.K."/>
            <person name="Chiang H.C."/>
            <person name="Hooper L.V."/>
            <person name="Gordon J.I."/>
        </authorList>
    </citation>
    <scope>NUCLEOTIDE SEQUENCE [LARGE SCALE GENOMIC DNA]</scope>
    <source>
        <strain>ATCC 29148 / DSM 2079 / JCM 5827 / CCUG 10774 / NCTC 10582 / VPI-5482 / E50</strain>
    </source>
</reference>
<proteinExistence type="inferred from homology"/>
<sequence length="114" mass="13357">MNQYETVFILTPVLSDVQMKEAVEKFKGILQAEGAEIINEENWGLKKLAYPIQKKSTGFYQLVEFNADPTVIDKLELNFRRDERVIRFLTFKMDKYAAEYAAKRRSVKSNKKED</sequence>
<feature type="chain" id="PRO_0000176727" description="Small ribosomal subunit protein bS6">
    <location>
        <begin position="1"/>
        <end position="114"/>
    </location>
</feature>
<gene>
    <name evidence="1" type="primary">rpsF</name>
    <name type="ordered locus">BT_2163</name>
</gene>
<protein>
    <recommendedName>
        <fullName evidence="1">Small ribosomal subunit protein bS6</fullName>
    </recommendedName>
    <alternativeName>
        <fullName evidence="2">30S ribosomal protein S6</fullName>
    </alternativeName>
</protein>
<name>RS6_BACTN</name>
<keyword id="KW-1185">Reference proteome</keyword>
<keyword id="KW-0687">Ribonucleoprotein</keyword>
<keyword id="KW-0689">Ribosomal protein</keyword>
<keyword id="KW-0694">RNA-binding</keyword>
<keyword id="KW-0699">rRNA-binding</keyword>
<dbReference type="EMBL" id="AE015928">
    <property type="protein sequence ID" value="AAO77270.1"/>
    <property type="molecule type" value="Genomic_DNA"/>
</dbReference>
<dbReference type="RefSeq" id="NP_811076.1">
    <property type="nucleotide sequence ID" value="NC_004663.1"/>
</dbReference>
<dbReference type="RefSeq" id="WP_008759739.1">
    <property type="nucleotide sequence ID" value="NZ_UYXG01000020.1"/>
</dbReference>
<dbReference type="SMR" id="Q8A5S5"/>
<dbReference type="FunCoup" id="Q8A5S5">
    <property type="interactions" value="532"/>
</dbReference>
<dbReference type="STRING" id="226186.BT_2163"/>
<dbReference type="PaxDb" id="226186-BT_2163"/>
<dbReference type="EnsemblBacteria" id="AAO77270">
    <property type="protein sequence ID" value="AAO77270"/>
    <property type="gene ID" value="BT_2163"/>
</dbReference>
<dbReference type="GeneID" id="60923333"/>
<dbReference type="KEGG" id="bth:BT_2163"/>
<dbReference type="PATRIC" id="fig|226186.12.peg.2227"/>
<dbReference type="eggNOG" id="COG0360">
    <property type="taxonomic scope" value="Bacteria"/>
</dbReference>
<dbReference type="HOGENOM" id="CLU_113441_4_3_10"/>
<dbReference type="InParanoid" id="Q8A5S5"/>
<dbReference type="OrthoDB" id="9812702at2"/>
<dbReference type="Proteomes" id="UP000001414">
    <property type="component" value="Chromosome"/>
</dbReference>
<dbReference type="GO" id="GO:0005737">
    <property type="term" value="C:cytoplasm"/>
    <property type="evidence" value="ECO:0007669"/>
    <property type="project" value="UniProtKB-ARBA"/>
</dbReference>
<dbReference type="GO" id="GO:1990904">
    <property type="term" value="C:ribonucleoprotein complex"/>
    <property type="evidence" value="ECO:0007669"/>
    <property type="project" value="UniProtKB-KW"/>
</dbReference>
<dbReference type="GO" id="GO:0005840">
    <property type="term" value="C:ribosome"/>
    <property type="evidence" value="ECO:0007669"/>
    <property type="project" value="UniProtKB-KW"/>
</dbReference>
<dbReference type="GO" id="GO:0070181">
    <property type="term" value="F:small ribosomal subunit rRNA binding"/>
    <property type="evidence" value="ECO:0000318"/>
    <property type="project" value="GO_Central"/>
</dbReference>
<dbReference type="GO" id="GO:0003735">
    <property type="term" value="F:structural constituent of ribosome"/>
    <property type="evidence" value="ECO:0000318"/>
    <property type="project" value="GO_Central"/>
</dbReference>
<dbReference type="GO" id="GO:0006412">
    <property type="term" value="P:translation"/>
    <property type="evidence" value="ECO:0007669"/>
    <property type="project" value="UniProtKB-UniRule"/>
</dbReference>
<dbReference type="CDD" id="cd00473">
    <property type="entry name" value="bS6"/>
    <property type="match status" value="1"/>
</dbReference>
<dbReference type="FunFam" id="3.30.70.60:FF:000011">
    <property type="entry name" value="30S ribosomal protein S6"/>
    <property type="match status" value="1"/>
</dbReference>
<dbReference type="Gene3D" id="3.30.70.60">
    <property type="match status" value="1"/>
</dbReference>
<dbReference type="HAMAP" id="MF_00360">
    <property type="entry name" value="Ribosomal_bS6"/>
    <property type="match status" value="1"/>
</dbReference>
<dbReference type="InterPro" id="IPR000529">
    <property type="entry name" value="Ribosomal_bS6"/>
</dbReference>
<dbReference type="InterPro" id="IPR035980">
    <property type="entry name" value="Ribosomal_bS6_sf"/>
</dbReference>
<dbReference type="InterPro" id="IPR020814">
    <property type="entry name" value="Ribosomal_S6_plastid/chlpt"/>
</dbReference>
<dbReference type="InterPro" id="IPR014717">
    <property type="entry name" value="Transl_elong_EF1B/ribsomal_bS6"/>
</dbReference>
<dbReference type="NCBIfam" id="TIGR00166">
    <property type="entry name" value="S6"/>
    <property type="match status" value="1"/>
</dbReference>
<dbReference type="PANTHER" id="PTHR21011">
    <property type="entry name" value="MITOCHONDRIAL 28S RIBOSOMAL PROTEIN S6"/>
    <property type="match status" value="1"/>
</dbReference>
<dbReference type="PANTHER" id="PTHR21011:SF1">
    <property type="entry name" value="SMALL RIBOSOMAL SUBUNIT PROTEIN BS6M"/>
    <property type="match status" value="1"/>
</dbReference>
<dbReference type="Pfam" id="PF01250">
    <property type="entry name" value="Ribosomal_S6"/>
    <property type="match status" value="1"/>
</dbReference>
<dbReference type="SUPFAM" id="SSF54995">
    <property type="entry name" value="Ribosomal protein S6"/>
    <property type="match status" value="1"/>
</dbReference>
<organism>
    <name type="scientific">Bacteroides thetaiotaomicron (strain ATCC 29148 / DSM 2079 / JCM 5827 / CCUG 10774 / NCTC 10582 / VPI-5482 / E50)</name>
    <dbReference type="NCBI Taxonomy" id="226186"/>
    <lineage>
        <taxon>Bacteria</taxon>
        <taxon>Pseudomonadati</taxon>
        <taxon>Bacteroidota</taxon>
        <taxon>Bacteroidia</taxon>
        <taxon>Bacteroidales</taxon>
        <taxon>Bacteroidaceae</taxon>
        <taxon>Bacteroides</taxon>
    </lineage>
</organism>